<evidence type="ECO:0000255" key="1">
    <source>
        <dbReference type="HAMAP-Rule" id="MF_01317"/>
    </source>
</evidence>
<feature type="chain" id="PRO_0000353251" description="Photosystem II reaction center protein L">
    <location>
        <begin position="1"/>
        <end position="38"/>
    </location>
</feature>
<feature type="transmembrane region" description="Helical" evidence="1">
    <location>
        <begin position="17"/>
        <end position="37"/>
    </location>
</feature>
<name>PSBL_BRADI</name>
<accession>B3TN65</accession>
<keyword id="KW-0150">Chloroplast</keyword>
<keyword id="KW-0472">Membrane</keyword>
<keyword id="KW-0602">Photosynthesis</keyword>
<keyword id="KW-0604">Photosystem II</keyword>
<keyword id="KW-0934">Plastid</keyword>
<keyword id="KW-0674">Reaction center</keyword>
<keyword id="KW-1185">Reference proteome</keyword>
<keyword id="KW-0793">Thylakoid</keyword>
<keyword id="KW-0812">Transmembrane</keyword>
<keyword id="KW-1133">Transmembrane helix</keyword>
<dbReference type="EMBL" id="EU325680">
    <property type="protein sequence ID" value="ACF08654.1"/>
    <property type="molecule type" value="Genomic_DNA"/>
</dbReference>
<dbReference type="RefSeq" id="YP_002000501.1">
    <property type="nucleotide sequence ID" value="NC_011032.1"/>
</dbReference>
<dbReference type="SMR" id="B3TN65"/>
<dbReference type="FunCoup" id="B3TN65">
    <property type="interactions" value="164"/>
</dbReference>
<dbReference type="STRING" id="15368.B3TN65"/>
<dbReference type="EnsemblPlants" id="KQJ93340">
    <property type="protein sequence ID" value="KQJ93340"/>
    <property type="gene ID" value="BRADI_3g03941v3"/>
</dbReference>
<dbReference type="EnsemblPlants" id="KQJ96838">
    <property type="protein sequence ID" value="KQJ96838"/>
    <property type="gene ID" value="BRADI_3g27337v3"/>
</dbReference>
<dbReference type="GeneID" id="6439867"/>
<dbReference type="Gramene" id="KQJ93340">
    <property type="protein sequence ID" value="KQJ93340"/>
    <property type="gene ID" value="BRADI_3g03941v3"/>
</dbReference>
<dbReference type="Gramene" id="KQJ96838">
    <property type="protein sequence ID" value="KQJ96838"/>
    <property type="gene ID" value="BRADI_3g27337v3"/>
</dbReference>
<dbReference type="KEGG" id="bdi:6439867"/>
<dbReference type="InParanoid" id="B3TN65"/>
<dbReference type="OrthoDB" id="583925at2759"/>
<dbReference type="Proteomes" id="UP000008810">
    <property type="component" value="Unplaced"/>
</dbReference>
<dbReference type="GO" id="GO:0009535">
    <property type="term" value="C:chloroplast thylakoid membrane"/>
    <property type="evidence" value="ECO:0007669"/>
    <property type="project" value="UniProtKB-SubCell"/>
</dbReference>
<dbReference type="GO" id="GO:0009539">
    <property type="term" value="C:photosystem II reaction center"/>
    <property type="evidence" value="ECO:0007669"/>
    <property type="project" value="InterPro"/>
</dbReference>
<dbReference type="GO" id="GO:0015979">
    <property type="term" value="P:photosynthesis"/>
    <property type="evidence" value="ECO:0007669"/>
    <property type="project" value="UniProtKB-UniRule"/>
</dbReference>
<dbReference type="HAMAP" id="MF_01317">
    <property type="entry name" value="PSII_PsbL"/>
    <property type="match status" value="1"/>
</dbReference>
<dbReference type="InterPro" id="IPR003372">
    <property type="entry name" value="PSII_PsbL"/>
</dbReference>
<dbReference type="InterPro" id="IPR037266">
    <property type="entry name" value="PSII_PsbL_sf"/>
</dbReference>
<dbReference type="NCBIfam" id="NF001972">
    <property type="entry name" value="PRK00753.1"/>
    <property type="match status" value="1"/>
</dbReference>
<dbReference type="Pfam" id="PF02419">
    <property type="entry name" value="PsbL"/>
    <property type="match status" value="1"/>
</dbReference>
<dbReference type="SUPFAM" id="SSF161017">
    <property type="entry name" value="Photosystem II reaction center protein L, PsbL"/>
    <property type="match status" value="1"/>
</dbReference>
<gene>
    <name evidence="1" type="primary">psbL</name>
</gene>
<reference key="1">
    <citation type="journal article" date="2008" name="BMC Res. Notes">
        <title>The complete chloroplast genome sequence of Brachypodium distachyon: sequence comparison and phylogenetic analysis of eight grass plastomes.</title>
        <authorList>
            <person name="Bortiri E."/>
            <person name="Coleman-Derr D."/>
            <person name="Lazo G.R."/>
            <person name="Anderson O.D."/>
            <person name="Gu Y.Q."/>
        </authorList>
    </citation>
    <scope>NUCLEOTIDE SEQUENCE [LARGE SCALE GENOMIC DNA]</scope>
    <source>
        <strain>cv. Bd21</strain>
    </source>
</reference>
<organism>
    <name type="scientific">Brachypodium distachyon</name>
    <name type="common">Purple false brome</name>
    <name type="synonym">Trachynia distachya</name>
    <dbReference type="NCBI Taxonomy" id="15368"/>
    <lineage>
        <taxon>Eukaryota</taxon>
        <taxon>Viridiplantae</taxon>
        <taxon>Streptophyta</taxon>
        <taxon>Embryophyta</taxon>
        <taxon>Tracheophyta</taxon>
        <taxon>Spermatophyta</taxon>
        <taxon>Magnoliopsida</taxon>
        <taxon>Liliopsida</taxon>
        <taxon>Poales</taxon>
        <taxon>Poaceae</taxon>
        <taxon>BOP clade</taxon>
        <taxon>Pooideae</taxon>
        <taxon>Stipodae</taxon>
        <taxon>Brachypodieae</taxon>
        <taxon>Brachypodium</taxon>
    </lineage>
</organism>
<sequence>MTQSNPNEQNVELNRTSLYWGLLLIFVLAVLFSNYFFN</sequence>
<comment type="function">
    <text evidence="1">One of the components of the core complex of photosystem II (PSII). PSII is a light-driven water:plastoquinone oxidoreductase that uses light energy to abstract electrons from H(2)O, generating O(2) and a proton gradient subsequently used for ATP formation. It consists of a core antenna complex that captures photons, and an electron transfer chain that converts photonic excitation into a charge separation. This subunit is found at the monomer-monomer interface and is required for correct PSII assembly and/or dimerization.</text>
</comment>
<comment type="subunit">
    <text evidence="1">PSII is composed of 1 copy each of membrane proteins PsbA, PsbB, PsbC, PsbD, PsbE, PsbF, PsbH, PsbI, PsbJ, PsbK, PsbL, PsbM, PsbT, PsbX, PsbY, PsbZ, Psb30/Ycf12, at least 3 peripheral proteins of the oxygen-evolving complex and a large number of cofactors. It forms dimeric complexes.</text>
</comment>
<comment type="subcellular location">
    <subcellularLocation>
        <location evidence="1">Plastid</location>
        <location evidence="1">Chloroplast thylakoid membrane</location>
        <topology evidence="1">Single-pass membrane protein</topology>
    </subcellularLocation>
</comment>
<comment type="similarity">
    <text evidence="1">Belongs to the PsbL family.</text>
</comment>
<protein>
    <recommendedName>
        <fullName evidence="1">Photosystem II reaction center protein L</fullName>
        <shortName evidence="1">PSII-L</shortName>
    </recommendedName>
</protein>
<geneLocation type="chloroplast"/>
<proteinExistence type="inferred from homology"/>